<accession>Q9H9Q2</accession>
<accession>Q53S22</accession>
<accession>Q5BJG3</accession>
<accession>Q9H7V6</accession>
<feature type="initiator methionine" description="Removed" evidence="9 15">
    <location>
        <position position="1"/>
    </location>
</feature>
<feature type="chain" id="PRO_0000120999" description="COP9 signalosome complex subunit 7b">
    <location>
        <begin position="2"/>
        <end position="264"/>
    </location>
</feature>
<feature type="domain" description="PCI" evidence="2">
    <location>
        <begin position="2"/>
        <end position="159"/>
    </location>
</feature>
<feature type="region of interest" description="Disordered" evidence="3">
    <location>
        <begin position="223"/>
        <end position="264"/>
    </location>
</feature>
<feature type="coiled-coil region" evidence="1">
    <location>
        <begin position="188"/>
        <end position="237"/>
    </location>
</feature>
<feature type="compositionally biased region" description="Polar residues" evidence="3">
    <location>
        <begin position="223"/>
        <end position="232"/>
    </location>
</feature>
<feature type="compositionally biased region" description="Basic and acidic residues" evidence="3">
    <location>
        <begin position="235"/>
        <end position="248"/>
    </location>
</feature>
<feature type="modified residue" description="N-acetylalanine" evidence="9 15">
    <location>
        <position position="2"/>
    </location>
</feature>
<feature type="splice variant" id="VSP_011913" description="In isoform 2." evidence="12">
    <location>
        <begin position="1"/>
        <end position="107"/>
    </location>
</feature>
<feature type="splice variant" id="VSP_040266" description="In isoform 3." evidence="13">
    <original>VTNIKKTLKATASSSAQEMEQQLAERECPPHAEQRQPTKKMSKVKGLVSSRH</original>
    <variation>REKRDVPLLNLITTAFFWLPTSRRHSKPPHPPRLRRWSSSWLNGSVPLTLSRGSPPRRCPK</variation>
    <location>
        <begin position="213"/>
        <end position="264"/>
    </location>
</feature>
<feature type="modified residue" description="Phosphothreonine" evidence="16">
    <location sequence="Q9H9Q2-3">
        <position position="261"/>
    </location>
</feature>
<feature type="modified residue" description="Phosphoserine" evidence="16">
    <location sequence="Q9H9Q2-3">
        <position position="263"/>
    </location>
</feature>
<evidence type="ECO:0000255" key="1"/>
<evidence type="ECO:0000255" key="2">
    <source>
        <dbReference type="PROSITE-ProRule" id="PRU01185"/>
    </source>
</evidence>
<evidence type="ECO:0000256" key="3">
    <source>
        <dbReference type="SAM" id="MobiDB-lite"/>
    </source>
</evidence>
<evidence type="ECO:0000269" key="4">
    <source>
    </source>
</evidence>
<evidence type="ECO:0000269" key="5">
    <source>
    </source>
</evidence>
<evidence type="ECO:0000269" key="6">
    <source>
    </source>
</evidence>
<evidence type="ECO:0000269" key="7">
    <source>
    </source>
</evidence>
<evidence type="ECO:0000269" key="8">
    <source>
    </source>
</evidence>
<evidence type="ECO:0000269" key="9">
    <source>
    </source>
</evidence>
<evidence type="ECO:0000269" key="10">
    <source>
    </source>
</evidence>
<evidence type="ECO:0000269" key="11">
    <source>
    </source>
</evidence>
<evidence type="ECO:0000303" key="12">
    <source>
    </source>
</evidence>
<evidence type="ECO:0000303" key="13">
    <source>
    </source>
</evidence>
<evidence type="ECO:0000305" key="14"/>
<evidence type="ECO:0007744" key="15">
    <source>
    </source>
</evidence>
<evidence type="ECO:0007744" key="16">
    <source>
    </source>
</evidence>
<gene>
    <name type="primary">COPS7B</name>
    <name type="synonym">CSN7B</name>
</gene>
<name>CSN7B_HUMAN</name>
<organism>
    <name type="scientific">Homo sapiens</name>
    <name type="common">Human</name>
    <dbReference type="NCBI Taxonomy" id="9606"/>
    <lineage>
        <taxon>Eukaryota</taxon>
        <taxon>Metazoa</taxon>
        <taxon>Chordata</taxon>
        <taxon>Craniata</taxon>
        <taxon>Vertebrata</taxon>
        <taxon>Euteleostomi</taxon>
        <taxon>Mammalia</taxon>
        <taxon>Eutheria</taxon>
        <taxon>Euarchontoglires</taxon>
        <taxon>Primates</taxon>
        <taxon>Haplorrhini</taxon>
        <taxon>Catarrhini</taxon>
        <taxon>Hominidae</taxon>
        <taxon>Homo</taxon>
    </lineage>
</organism>
<proteinExistence type="evidence at protein level"/>
<keyword id="KW-0002">3D-structure</keyword>
<keyword id="KW-0007">Acetylation</keyword>
<keyword id="KW-0025">Alternative splicing</keyword>
<keyword id="KW-0175">Coiled coil</keyword>
<keyword id="KW-0963">Cytoplasm</keyword>
<keyword id="KW-0945">Host-virus interaction</keyword>
<keyword id="KW-0539">Nucleus</keyword>
<keyword id="KW-0597">Phosphoprotein</keyword>
<keyword id="KW-1267">Proteomics identification</keyword>
<keyword id="KW-1185">Reference proteome</keyword>
<keyword id="KW-0736">Signalosome</keyword>
<dbReference type="EMBL" id="AK022674">
    <property type="protein sequence ID" value="BAB14170.1"/>
    <property type="molecule type" value="mRNA"/>
</dbReference>
<dbReference type="EMBL" id="AK024273">
    <property type="protein sequence ID" value="BAB14868.1"/>
    <property type="molecule type" value="mRNA"/>
</dbReference>
<dbReference type="EMBL" id="AC073476">
    <property type="protein sequence ID" value="AAY24152.1"/>
    <property type="molecule type" value="Genomic_DNA"/>
</dbReference>
<dbReference type="EMBL" id="CH471063">
    <property type="protein sequence ID" value="EAW70980.1"/>
    <property type="molecule type" value="Genomic_DNA"/>
</dbReference>
<dbReference type="EMBL" id="BC010739">
    <property type="protein sequence ID" value="AAH10739.2"/>
    <property type="molecule type" value="mRNA"/>
</dbReference>
<dbReference type="EMBL" id="BC091493">
    <property type="protein sequence ID" value="AAH91493.1"/>
    <property type="molecule type" value="mRNA"/>
</dbReference>
<dbReference type="CCDS" id="CCDS2488.1">
    <molecule id="Q9H9Q2-1"/>
</dbReference>
<dbReference type="CCDS" id="CCDS63153.1">
    <molecule id="Q9H9Q2-3"/>
</dbReference>
<dbReference type="CCDS" id="CCDS63154.1">
    <molecule id="Q9H9Q2-2"/>
</dbReference>
<dbReference type="RefSeq" id="NP_001269879.1">
    <molecule id="Q9H9Q2-3"/>
    <property type="nucleotide sequence ID" value="NM_001282950.3"/>
</dbReference>
<dbReference type="RefSeq" id="NP_001269881.1">
    <molecule id="Q9H9Q2-2"/>
    <property type="nucleotide sequence ID" value="NM_001282952.3"/>
</dbReference>
<dbReference type="RefSeq" id="NP_001356412.1">
    <molecule id="Q9H9Q2-1"/>
    <property type="nucleotide sequence ID" value="NM_001369483.1"/>
</dbReference>
<dbReference type="RefSeq" id="NP_073567.1">
    <molecule id="Q9H9Q2-1"/>
    <property type="nucleotide sequence ID" value="NM_022730.4"/>
</dbReference>
<dbReference type="RefSeq" id="XP_016860205.1">
    <property type="nucleotide sequence ID" value="XM_017004716.1"/>
</dbReference>
<dbReference type="RefSeq" id="XP_016860206.1">
    <property type="nucleotide sequence ID" value="XM_017004717.1"/>
</dbReference>
<dbReference type="PDB" id="6R6H">
    <property type="method" value="EM"/>
    <property type="resolution" value="8.40 A"/>
    <property type="chains" value="G=9-214"/>
</dbReference>
<dbReference type="PDB" id="6R7F">
    <property type="method" value="EM"/>
    <property type="resolution" value="8.20 A"/>
    <property type="chains" value="G=8-215"/>
</dbReference>
<dbReference type="PDB" id="6R7H">
    <property type="method" value="EM"/>
    <property type="resolution" value="8.80 A"/>
    <property type="chains" value="G=8-215"/>
</dbReference>
<dbReference type="PDB" id="6R7I">
    <property type="method" value="EM"/>
    <property type="resolution" value="5.90 A"/>
    <property type="chains" value="G=1-215"/>
</dbReference>
<dbReference type="PDB" id="6R7N">
    <property type="method" value="EM"/>
    <property type="resolution" value="6.50 A"/>
    <property type="chains" value="G=1-215"/>
</dbReference>
<dbReference type="PDB" id="8H38">
    <property type="method" value="EM"/>
    <property type="resolution" value="4.25 A"/>
    <property type="chains" value="G=1-264"/>
</dbReference>
<dbReference type="PDB" id="8H3A">
    <property type="method" value="EM"/>
    <property type="resolution" value="7.51 A"/>
    <property type="chains" value="G=1-264"/>
</dbReference>
<dbReference type="PDB" id="8H3F">
    <property type="method" value="EM"/>
    <property type="resolution" value="6.73 A"/>
    <property type="chains" value="G=1-220"/>
</dbReference>
<dbReference type="PDBsum" id="6R6H"/>
<dbReference type="PDBsum" id="6R7F"/>
<dbReference type="PDBsum" id="6R7H"/>
<dbReference type="PDBsum" id="6R7I"/>
<dbReference type="PDBsum" id="6R7N"/>
<dbReference type="PDBsum" id="8H38"/>
<dbReference type="PDBsum" id="8H3A"/>
<dbReference type="PDBsum" id="8H3F"/>
<dbReference type="EMDB" id="EMD-3401"/>
<dbReference type="EMDB" id="EMD-34455"/>
<dbReference type="EMDB" id="EMD-34462"/>
<dbReference type="EMDB" id="EMD-34467"/>
<dbReference type="EMDB" id="EMD-4736"/>
<dbReference type="EMDB" id="EMD-4739"/>
<dbReference type="EMDB" id="EMD-4741"/>
<dbReference type="EMDB" id="EMD-4742"/>
<dbReference type="EMDB" id="EMD-4744"/>
<dbReference type="SMR" id="Q9H9Q2"/>
<dbReference type="BioGRID" id="122237">
    <property type="interactions" value="152"/>
</dbReference>
<dbReference type="ComplexPortal" id="CPX-1871">
    <property type="entry name" value="COP9 signalosome variant 2"/>
</dbReference>
<dbReference type="DIP" id="DIP-53525N"/>
<dbReference type="FunCoup" id="Q9H9Q2">
    <property type="interactions" value="4847"/>
</dbReference>
<dbReference type="IntAct" id="Q9H9Q2">
    <property type="interactions" value="83"/>
</dbReference>
<dbReference type="MINT" id="Q9H9Q2"/>
<dbReference type="STRING" id="9606.ENSP00000386880"/>
<dbReference type="ChEMBL" id="CHEMBL5706"/>
<dbReference type="GlyGen" id="Q9H9Q2">
    <property type="glycosylation" value="1 site, 1 O-linked glycan (1 site)"/>
</dbReference>
<dbReference type="iPTMnet" id="Q9H9Q2"/>
<dbReference type="MetOSite" id="Q9H9Q2"/>
<dbReference type="PhosphoSitePlus" id="Q9H9Q2"/>
<dbReference type="SwissPalm" id="Q9H9Q2"/>
<dbReference type="BioMuta" id="COPS7B"/>
<dbReference type="DMDM" id="55976598"/>
<dbReference type="jPOST" id="Q9H9Q2"/>
<dbReference type="MassIVE" id="Q9H9Q2"/>
<dbReference type="PaxDb" id="9606-ENSP00000362710"/>
<dbReference type="PeptideAtlas" id="Q9H9Q2"/>
<dbReference type="ProteomicsDB" id="81347">
    <molecule id="Q9H9Q2-1"/>
</dbReference>
<dbReference type="ProteomicsDB" id="81348">
    <molecule id="Q9H9Q2-2"/>
</dbReference>
<dbReference type="ProteomicsDB" id="81349">
    <molecule id="Q9H9Q2-3"/>
</dbReference>
<dbReference type="Pumba" id="Q9H9Q2"/>
<dbReference type="Antibodypedia" id="20213">
    <property type="antibodies" value="103 antibodies from 19 providers"/>
</dbReference>
<dbReference type="DNASU" id="64708"/>
<dbReference type="Ensembl" id="ENST00000350033.8">
    <molecule id="Q9H9Q2-1"/>
    <property type="protein sequence ID" value="ENSP00000272995.5"/>
    <property type="gene ID" value="ENSG00000144524.18"/>
</dbReference>
<dbReference type="Ensembl" id="ENST00000373608.7">
    <molecule id="Q9H9Q2-3"/>
    <property type="protein sequence ID" value="ENSP00000362710.3"/>
    <property type="gene ID" value="ENSG00000144524.18"/>
</dbReference>
<dbReference type="Ensembl" id="ENST00000409091.5">
    <molecule id="Q9H9Q2-2"/>
    <property type="protein sequence ID" value="ENSP00000386527.1"/>
    <property type="gene ID" value="ENSG00000144524.18"/>
</dbReference>
<dbReference type="Ensembl" id="ENST00000410024.5">
    <molecule id="Q9H9Q2-1"/>
    <property type="protein sequence ID" value="ENSP00000386567.1"/>
    <property type="gene ID" value="ENSG00000144524.18"/>
</dbReference>
<dbReference type="Ensembl" id="ENST00000620578.4">
    <molecule id="Q9H9Q2-2"/>
    <property type="protein sequence ID" value="ENSP00000484579.1"/>
    <property type="gene ID" value="ENSG00000144524.18"/>
</dbReference>
<dbReference type="GeneID" id="64708"/>
<dbReference type="KEGG" id="hsa:64708"/>
<dbReference type="MANE-Select" id="ENST00000350033.8">
    <property type="protein sequence ID" value="ENSP00000272995.5"/>
    <property type="RefSeq nucleotide sequence ID" value="NM_022730.4"/>
    <property type="RefSeq protein sequence ID" value="NP_073567.1"/>
</dbReference>
<dbReference type="UCSC" id="uc002vsg.3">
    <molecule id="Q9H9Q2-1"/>
    <property type="organism name" value="human"/>
</dbReference>
<dbReference type="AGR" id="HGNC:16760"/>
<dbReference type="CTD" id="64708"/>
<dbReference type="DisGeNET" id="64708"/>
<dbReference type="GeneCards" id="COPS7B"/>
<dbReference type="HGNC" id="HGNC:16760">
    <property type="gene designation" value="COPS7B"/>
</dbReference>
<dbReference type="HPA" id="ENSG00000144524">
    <property type="expression patterns" value="Low tissue specificity"/>
</dbReference>
<dbReference type="MIM" id="616010">
    <property type="type" value="gene"/>
</dbReference>
<dbReference type="neXtProt" id="NX_Q9H9Q2"/>
<dbReference type="OpenTargets" id="ENSG00000144524"/>
<dbReference type="PharmGKB" id="PA26759"/>
<dbReference type="VEuPathDB" id="HostDB:ENSG00000144524"/>
<dbReference type="eggNOG" id="KOG3250">
    <property type="taxonomic scope" value="Eukaryota"/>
</dbReference>
<dbReference type="GeneTree" id="ENSGT00940000157155"/>
<dbReference type="HOGENOM" id="CLU_054426_1_0_1"/>
<dbReference type="InParanoid" id="Q9H9Q2"/>
<dbReference type="OMA" id="GTYKQFR"/>
<dbReference type="OrthoDB" id="10265275at2759"/>
<dbReference type="PAN-GO" id="Q9H9Q2">
    <property type="GO annotations" value="1 GO annotation based on evolutionary models"/>
</dbReference>
<dbReference type="PhylomeDB" id="Q9H9Q2"/>
<dbReference type="TreeFam" id="TF101149"/>
<dbReference type="PathwayCommons" id="Q9H9Q2"/>
<dbReference type="Reactome" id="R-HSA-5696394">
    <property type="pathway name" value="DNA Damage Recognition in GG-NER"/>
</dbReference>
<dbReference type="Reactome" id="R-HSA-6781823">
    <property type="pathway name" value="Formation of TC-NER Pre-Incision Complex"/>
</dbReference>
<dbReference type="Reactome" id="R-HSA-8856825">
    <property type="pathway name" value="Cargo recognition for clathrin-mediated endocytosis"/>
</dbReference>
<dbReference type="Reactome" id="R-HSA-8951664">
    <property type="pathway name" value="Neddylation"/>
</dbReference>
<dbReference type="SignaLink" id="Q9H9Q2"/>
<dbReference type="SIGNOR" id="Q9H9Q2"/>
<dbReference type="BioGRID-ORCS" id="64708">
    <property type="hits" value="21 hits in 1167 CRISPR screens"/>
</dbReference>
<dbReference type="CD-CODE" id="8C2F96ED">
    <property type="entry name" value="Centrosome"/>
</dbReference>
<dbReference type="ChiTaRS" id="COPS7B">
    <property type="organism name" value="human"/>
</dbReference>
<dbReference type="GeneWiki" id="COPS7B"/>
<dbReference type="GenomeRNAi" id="64708"/>
<dbReference type="Pharos" id="Q9H9Q2">
    <property type="development level" value="Tbio"/>
</dbReference>
<dbReference type="PRO" id="PR:Q9H9Q2"/>
<dbReference type="Proteomes" id="UP000005640">
    <property type="component" value="Chromosome 2"/>
</dbReference>
<dbReference type="RNAct" id="Q9H9Q2">
    <property type="molecule type" value="protein"/>
</dbReference>
<dbReference type="Bgee" id="ENSG00000144524">
    <property type="expression patterns" value="Expressed in right uterine tube and 167 other cell types or tissues"/>
</dbReference>
<dbReference type="ExpressionAtlas" id="Q9H9Q2">
    <property type="expression patterns" value="baseline and differential"/>
</dbReference>
<dbReference type="GO" id="GO:0008180">
    <property type="term" value="C:COP9 signalosome"/>
    <property type="evidence" value="ECO:0000314"/>
    <property type="project" value="UniProtKB"/>
</dbReference>
<dbReference type="GO" id="GO:0005737">
    <property type="term" value="C:cytoplasm"/>
    <property type="evidence" value="ECO:0000250"/>
    <property type="project" value="ComplexPortal"/>
</dbReference>
<dbReference type="GO" id="GO:0005829">
    <property type="term" value="C:cytosol"/>
    <property type="evidence" value="ECO:0000304"/>
    <property type="project" value="Reactome"/>
</dbReference>
<dbReference type="GO" id="GO:0005654">
    <property type="term" value="C:nucleoplasm"/>
    <property type="evidence" value="ECO:0000314"/>
    <property type="project" value="HPA"/>
</dbReference>
<dbReference type="GO" id="GO:0005634">
    <property type="term" value="C:nucleus"/>
    <property type="evidence" value="ECO:0000250"/>
    <property type="project" value="ComplexPortal"/>
</dbReference>
<dbReference type="GO" id="GO:0010387">
    <property type="term" value="P:COP9 signalosome assembly"/>
    <property type="evidence" value="ECO:0007669"/>
    <property type="project" value="InterPro"/>
</dbReference>
<dbReference type="GO" id="GO:0000338">
    <property type="term" value="P:protein deneddylation"/>
    <property type="evidence" value="ECO:0000314"/>
    <property type="project" value="UniProtKB"/>
</dbReference>
<dbReference type="GO" id="GO:2000434">
    <property type="term" value="P:regulation of protein neddylation"/>
    <property type="evidence" value="ECO:0000303"/>
    <property type="project" value="ComplexPortal"/>
</dbReference>
<dbReference type="InterPro" id="IPR045237">
    <property type="entry name" value="COPS7/eIF3m"/>
</dbReference>
<dbReference type="InterPro" id="IPR041481">
    <property type="entry name" value="CSN7_helixI"/>
</dbReference>
<dbReference type="InterPro" id="IPR000717">
    <property type="entry name" value="PCI_dom"/>
</dbReference>
<dbReference type="PANTHER" id="PTHR15350">
    <property type="entry name" value="COP9 SIGNALOSOME COMPLEX SUBUNIT 7/DENDRITIC CELL PROTEIN GA17"/>
    <property type="match status" value="1"/>
</dbReference>
<dbReference type="PANTHER" id="PTHR15350:SF8">
    <property type="entry name" value="COP9 SIGNALOSOME COMPLEX SUBUNIT 7B"/>
    <property type="match status" value="1"/>
</dbReference>
<dbReference type="Pfam" id="PF22061">
    <property type="entry name" value="CSN7_HB_subdom"/>
    <property type="match status" value="1"/>
</dbReference>
<dbReference type="Pfam" id="PF18392">
    <property type="entry name" value="CSN7a_helixI"/>
    <property type="match status" value="1"/>
</dbReference>
<dbReference type="Pfam" id="PF01399">
    <property type="entry name" value="PCI"/>
    <property type="match status" value="1"/>
</dbReference>
<dbReference type="SMART" id="SM00088">
    <property type="entry name" value="PINT"/>
    <property type="match status" value="1"/>
</dbReference>
<dbReference type="PROSITE" id="PS50250">
    <property type="entry name" value="PCI"/>
    <property type="match status" value="1"/>
</dbReference>
<protein>
    <recommendedName>
        <fullName>COP9 signalosome complex subunit 7b</fullName>
        <shortName>SGN7b</shortName>
        <shortName>Signalosome subunit 7b</shortName>
    </recommendedName>
    <alternativeName>
        <fullName>JAB1-containing signalosome subunit 7b</fullName>
    </alternativeName>
</protein>
<reference key="1">
    <citation type="journal article" date="2004" name="Nat. Genet.">
        <title>Complete sequencing and characterization of 21,243 full-length human cDNAs.</title>
        <authorList>
            <person name="Ota T."/>
            <person name="Suzuki Y."/>
            <person name="Nishikawa T."/>
            <person name="Otsuki T."/>
            <person name="Sugiyama T."/>
            <person name="Irie R."/>
            <person name="Wakamatsu A."/>
            <person name="Hayashi K."/>
            <person name="Sato H."/>
            <person name="Nagai K."/>
            <person name="Kimura K."/>
            <person name="Makita H."/>
            <person name="Sekine M."/>
            <person name="Obayashi M."/>
            <person name="Nishi T."/>
            <person name="Shibahara T."/>
            <person name="Tanaka T."/>
            <person name="Ishii S."/>
            <person name="Yamamoto J."/>
            <person name="Saito K."/>
            <person name="Kawai Y."/>
            <person name="Isono Y."/>
            <person name="Nakamura Y."/>
            <person name="Nagahari K."/>
            <person name="Murakami K."/>
            <person name="Yasuda T."/>
            <person name="Iwayanagi T."/>
            <person name="Wagatsuma M."/>
            <person name="Shiratori A."/>
            <person name="Sudo H."/>
            <person name="Hosoiri T."/>
            <person name="Kaku Y."/>
            <person name="Kodaira H."/>
            <person name="Kondo H."/>
            <person name="Sugawara M."/>
            <person name="Takahashi M."/>
            <person name="Kanda K."/>
            <person name="Yokoi T."/>
            <person name="Furuya T."/>
            <person name="Kikkawa E."/>
            <person name="Omura Y."/>
            <person name="Abe K."/>
            <person name="Kamihara K."/>
            <person name="Katsuta N."/>
            <person name="Sato K."/>
            <person name="Tanikawa M."/>
            <person name="Yamazaki M."/>
            <person name="Ninomiya K."/>
            <person name="Ishibashi T."/>
            <person name="Yamashita H."/>
            <person name="Murakawa K."/>
            <person name="Fujimori K."/>
            <person name="Tanai H."/>
            <person name="Kimata M."/>
            <person name="Watanabe M."/>
            <person name="Hiraoka S."/>
            <person name="Chiba Y."/>
            <person name="Ishida S."/>
            <person name="Ono Y."/>
            <person name="Takiguchi S."/>
            <person name="Watanabe S."/>
            <person name="Yosida M."/>
            <person name="Hotuta T."/>
            <person name="Kusano J."/>
            <person name="Kanehori K."/>
            <person name="Takahashi-Fujii A."/>
            <person name="Hara H."/>
            <person name="Tanase T.-O."/>
            <person name="Nomura Y."/>
            <person name="Togiya S."/>
            <person name="Komai F."/>
            <person name="Hara R."/>
            <person name="Takeuchi K."/>
            <person name="Arita M."/>
            <person name="Imose N."/>
            <person name="Musashino K."/>
            <person name="Yuuki H."/>
            <person name="Oshima A."/>
            <person name="Sasaki N."/>
            <person name="Aotsuka S."/>
            <person name="Yoshikawa Y."/>
            <person name="Matsunawa H."/>
            <person name="Ichihara T."/>
            <person name="Shiohata N."/>
            <person name="Sano S."/>
            <person name="Moriya S."/>
            <person name="Momiyama H."/>
            <person name="Satoh N."/>
            <person name="Takami S."/>
            <person name="Terashima Y."/>
            <person name="Suzuki O."/>
            <person name="Nakagawa S."/>
            <person name="Senoh A."/>
            <person name="Mizoguchi H."/>
            <person name="Goto Y."/>
            <person name="Shimizu F."/>
            <person name="Wakebe H."/>
            <person name="Hishigaki H."/>
            <person name="Watanabe T."/>
            <person name="Sugiyama A."/>
            <person name="Takemoto M."/>
            <person name="Kawakami B."/>
            <person name="Yamazaki M."/>
            <person name="Watanabe K."/>
            <person name="Kumagai A."/>
            <person name="Itakura S."/>
            <person name="Fukuzumi Y."/>
            <person name="Fujimori Y."/>
            <person name="Komiyama M."/>
            <person name="Tashiro H."/>
            <person name="Tanigami A."/>
            <person name="Fujiwara T."/>
            <person name="Ono T."/>
            <person name="Yamada K."/>
            <person name="Fujii Y."/>
            <person name="Ozaki K."/>
            <person name="Hirao M."/>
            <person name="Ohmori Y."/>
            <person name="Kawabata A."/>
            <person name="Hikiji T."/>
            <person name="Kobatake N."/>
            <person name="Inagaki H."/>
            <person name="Ikema Y."/>
            <person name="Okamoto S."/>
            <person name="Okitani R."/>
            <person name="Kawakami T."/>
            <person name="Noguchi S."/>
            <person name="Itoh T."/>
            <person name="Shigeta K."/>
            <person name="Senba T."/>
            <person name="Matsumura K."/>
            <person name="Nakajima Y."/>
            <person name="Mizuno T."/>
            <person name="Morinaga M."/>
            <person name="Sasaki M."/>
            <person name="Togashi T."/>
            <person name="Oyama M."/>
            <person name="Hata H."/>
            <person name="Watanabe M."/>
            <person name="Komatsu T."/>
            <person name="Mizushima-Sugano J."/>
            <person name="Satoh T."/>
            <person name="Shirai Y."/>
            <person name="Takahashi Y."/>
            <person name="Nakagawa K."/>
            <person name="Okumura K."/>
            <person name="Nagase T."/>
            <person name="Nomura N."/>
            <person name="Kikuchi H."/>
            <person name="Masuho Y."/>
            <person name="Yamashita R."/>
            <person name="Nakai K."/>
            <person name="Yada T."/>
            <person name="Nakamura Y."/>
            <person name="Ohara O."/>
            <person name="Isogai T."/>
            <person name="Sugano S."/>
        </authorList>
    </citation>
    <scope>NUCLEOTIDE SEQUENCE [LARGE SCALE MRNA] (ISOFORMS 1 AND 2)</scope>
    <source>
        <tissue>Teratocarcinoma</tissue>
        <tissue>Trachea</tissue>
    </source>
</reference>
<reference key="2">
    <citation type="journal article" date="2005" name="Nature">
        <title>Generation and annotation of the DNA sequences of human chromosomes 2 and 4.</title>
        <authorList>
            <person name="Hillier L.W."/>
            <person name="Graves T.A."/>
            <person name="Fulton R.S."/>
            <person name="Fulton L.A."/>
            <person name="Pepin K.H."/>
            <person name="Minx P."/>
            <person name="Wagner-McPherson C."/>
            <person name="Layman D."/>
            <person name="Wylie K."/>
            <person name="Sekhon M."/>
            <person name="Becker M.C."/>
            <person name="Fewell G.A."/>
            <person name="Delehaunty K.D."/>
            <person name="Miner T.L."/>
            <person name="Nash W.E."/>
            <person name="Kremitzki C."/>
            <person name="Oddy L."/>
            <person name="Du H."/>
            <person name="Sun H."/>
            <person name="Bradshaw-Cordum H."/>
            <person name="Ali J."/>
            <person name="Carter J."/>
            <person name="Cordes M."/>
            <person name="Harris A."/>
            <person name="Isak A."/>
            <person name="van Brunt A."/>
            <person name="Nguyen C."/>
            <person name="Du F."/>
            <person name="Courtney L."/>
            <person name="Kalicki J."/>
            <person name="Ozersky P."/>
            <person name="Abbott S."/>
            <person name="Armstrong J."/>
            <person name="Belter E.A."/>
            <person name="Caruso L."/>
            <person name="Cedroni M."/>
            <person name="Cotton M."/>
            <person name="Davidson T."/>
            <person name="Desai A."/>
            <person name="Elliott G."/>
            <person name="Erb T."/>
            <person name="Fronick C."/>
            <person name="Gaige T."/>
            <person name="Haakenson W."/>
            <person name="Haglund K."/>
            <person name="Holmes A."/>
            <person name="Harkins R."/>
            <person name="Kim K."/>
            <person name="Kruchowski S.S."/>
            <person name="Strong C.M."/>
            <person name="Grewal N."/>
            <person name="Goyea E."/>
            <person name="Hou S."/>
            <person name="Levy A."/>
            <person name="Martinka S."/>
            <person name="Mead K."/>
            <person name="McLellan M.D."/>
            <person name="Meyer R."/>
            <person name="Randall-Maher J."/>
            <person name="Tomlinson C."/>
            <person name="Dauphin-Kohlberg S."/>
            <person name="Kozlowicz-Reilly A."/>
            <person name="Shah N."/>
            <person name="Swearengen-Shahid S."/>
            <person name="Snider J."/>
            <person name="Strong J.T."/>
            <person name="Thompson J."/>
            <person name="Yoakum M."/>
            <person name="Leonard S."/>
            <person name="Pearman C."/>
            <person name="Trani L."/>
            <person name="Radionenko M."/>
            <person name="Waligorski J.E."/>
            <person name="Wang C."/>
            <person name="Rock S.M."/>
            <person name="Tin-Wollam A.-M."/>
            <person name="Maupin R."/>
            <person name="Latreille P."/>
            <person name="Wendl M.C."/>
            <person name="Yang S.-P."/>
            <person name="Pohl C."/>
            <person name="Wallis J.W."/>
            <person name="Spieth J."/>
            <person name="Bieri T.A."/>
            <person name="Berkowicz N."/>
            <person name="Nelson J.O."/>
            <person name="Osborne J."/>
            <person name="Ding L."/>
            <person name="Meyer R."/>
            <person name="Sabo A."/>
            <person name="Shotland Y."/>
            <person name="Sinha P."/>
            <person name="Wohldmann P.E."/>
            <person name="Cook L.L."/>
            <person name="Hickenbotham M.T."/>
            <person name="Eldred J."/>
            <person name="Williams D."/>
            <person name="Jones T.A."/>
            <person name="She X."/>
            <person name="Ciccarelli F.D."/>
            <person name="Izaurralde E."/>
            <person name="Taylor J."/>
            <person name="Schmutz J."/>
            <person name="Myers R.M."/>
            <person name="Cox D.R."/>
            <person name="Huang X."/>
            <person name="McPherson J.D."/>
            <person name="Mardis E.R."/>
            <person name="Clifton S.W."/>
            <person name="Warren W.C."/>
            <person name="Chinwalla A.T."/>
            <person name="Eddy S.R."/>
            <person name="Marra M.A."/>
            <person name="Ovcharenko I."/>
            <person name="Furey T.S."/>
            <person name="Miller W."/>
            <person name="Eichler E.E."/>
            <person name="Bork P."/>
            <person name="Suyama M."/>
            <person name="Torrents D."/>
            <person name="Waterston R.H."/>
            <person name="Wilson R.K."/>
        </authorList>
    </citation>
    <scope>NUCLEOTIDE SEQUENCE [LARGE SCALE GENOMIC DNA]</scope>
</reference>
<reference key="3">
    <citation type="submission" date="2005-07" db="EMBL/GenBank/DDBJ databases">
        <authorList>
            <person name="Mural R.J."/>
            <person name="Istrail S."/>
            <person name="Sutton G.G."/>
            <person name="Florea L."/>
            <person name="Halpern A.L."/>
            <person name="Mobarry C.M."/>
            <person name="Lippert R."/>
            <person name="Walenz B."/>
            <person name="Shatkay H."/>
            <person name="Dew I."/>
            <person name="Miller J.R."/>
            <person name="Flanigan M.J."/>
            <person name="Edwards N.J."/>
            <person name="Bolanos R."/>
            <person name="Fasulo D."/>
            <person name="Halldorsson B.V."/>
            <person name="Hannenhalli S."/>
            <person name="Turner R."/>
            <person name="Yooseph S."/>
            <person name="Lu F."/>
            <person name="Nusskern D.R."/>
            <person name="Shue B.C."/>
            <person name="Zheng X.H."/>
            <person name="Zhong F."/>
            <person name="Delcher A.L."/>
            <person name="Huson D.H."/>
            <person name="Kravitz S.A."/>
            <person name="Mouchard L."/>
            <person name="Reinert K."/>
            <person name="Remington K.A."/>
            <person name="Clark A.G."/>
            <person name="Waterman M.S."/>
            <person name="Eichler E.E."/>
            <person name="Adams M.D."/>
            <person name="Hunkapiller M.W."/>
            <person name="Myers E.W."/>
            <person name="Venter J.C."/>
        </authorList>
    </citation>
    <scope>NUCLEOTIDE SEQUENCE [LARGE SCALE GENOMIC DNA]</scope>
</reference>
<reference key="4">
    <citation type="journal article" date="2004" name="Genome Res.">
        <title>The status, quality, and expansion of the NIH full-length cDNA project: the Mammalian Gene Collection (MGC).</title>
        <authorList>
            <consortium name="The MGC Project Team"/>
        </authorList>
    </citation>
    <scope>NUCLEOTIDE SEQUENCE [LARGE SCALE MRNA] (ISOFORM 3)</scope>
    <scope>NUCLEOTIDE SEQUENCE [LARGE SCALE MRNA] OF 99-264 (ISOFORM 1)</scope>
    <source>
        <tissue>Lung</tissue>
        <tissue>Testis</tissue>
    </source>
</reference>
<reference key="5">
    <citation type="journal article" date="2001" name="EMBO J.">
        <title>COP9 signalosome-specific phosphorylation targets p53 to degradation by the ubiquitin system.</title>
        <authorList>
            <person name="Bech-Otschir D."/>
            <person name="Kraft R."/>
            <person name="Huang X."/>
            <person name="Henklein P."/>
            <person name="Kapelari B."/>
            <person name="Pollmann C."/>
            <person name="Dubiel W."/>
        </authorList>
    </citation>
    <scope>FUNCTION</scope>
</reference>
<reference key="6">
    <citation type="journal article" date="2001" name="Science">
        <title>Promotion of NEDD-CUL1 conjugate cleavage by COP9 signalosome.</title>
        <authorList>
            <person name="Lyapina S."/>
            <person name="Cope G."/>
            <person name="Shevchenko A."/>
            <person name="Serino G."/>
            <person name="Tsuge T."/>
            <person name="Zhou C."/>
            <person name="Wolf D.A."/>
            <person name="Wei N."/>
            <person name="Shevchenko A."/>
            <person name="Deshaies R.J."/>
        </authorList>
    </citation>
    <scope>FUNCTION</scope>
    <scope>COMPOSITION OF THE CSN COMPLEX</scope>
</reference>
<reference key="7">
    <citation type="journal article" date="2002" name="FEBS Lett.">
        <title>Association of the mammalian proto-oncoprotein Int-6 with the three protein complexes eIF3, COP9 signalosome and 26S proteasome.</title>
        <authorList>
            <person name="Hoareau Alves K."/>
            <person name="Bochard V."/>
            <person name="Rety S."/>
            <person name="Jalinot P."/>
        </authorList>
    </citation>
    <scope>INTERACTION WITH EIF3S6</scope>
</reference>
<reference key="8">
    <citation type="journal article" date="2003" name="Cell">
        <title>The ubiquitin ligase activity in the DDB2 and CSA complexes is differentially regulated by the COP9 signalosome in response to DNA damage.</title>
        <authorList>
            <person name="Groisman R."/>
            <person name="Polanowska J."/>
            <person name="Kuraoka I."/>
            <person name="Sawada J."/>
            <person name="Saijo M."/>
            <person name="Drapkin R."/>
            <person name="Kisselev A.F."/>
            <person name="Tanaka K."/>
            <person name="Nakatani Y."/>
        </authorList>
    </citation>
    <scope>FUNCTION</scope>
</reference>
<reference key="9">
    <citation type="journal article" date="2003" name="EMBO J.">
        <title>Protein kinase CK2 and protein kinase D are associated with the COP9 signalosome.</title>
        <authorList>
            <person name="Uhle S."/>
            <person name="Medalia O."/>
            <person name="Waldron R."/>
            <person name="Dumdey R."/>
            <person name="Henklein P."/>
            <person name="Bech-Otschir D."/>
            <person name="Huang X."/>
            <person name="Berse M."/>
            <person name="Sperling J."/>
            <person name="Schade R."/>
            <person name="Dubiel W."/>
        </authorList>
    </citation>
    <scope>FUNCTION</scope>
</reference>
<reference key="10">
    <citation type="journal article" date="2008" name="J. Proteome Res.">
        <title>Characterization of the human COP9 signalosome complex using affinity purification and mass spectrometry.</title>
        <authorList>
            <person name="Fang L."/>
            <person name="Wang X."/>
            <person name="Yamoah K."/>
            <person name="Chen P.L."/>
            <person name="Pan Z.Q."/>
            <person name="Huang L."/>
        </authorList>
    </citation>
    <scope>IDENTIFICATION IN THE CSN COMPLEX</scope>
    <scope>CLEAVAGE OF INITIATOR METHIONINE</scope>
    <scope>ACETYLATION AT ALA-2</scope>
</reference>
<reference key="11">
    <citation type="journal article" date="2009" name="Anal. Chem.">
        <title>Lys-N and trypsin cover complementary parts of the phosphoproteome in a refined SCX-based approach.</title>
        <authorList>
            <person name="Gauci S."/>
            <person name="Helbig A.O."/>
            <person name="Slijper M."/>
            <person name="Krijgsveld J."/>
            <person name="Heck A.J."/>
            <person name="Mohammed S."/>
        </authorList>
    </citation>
    <scope>ACETYLATION [LARGE SCALE ANALYSIS] AT ALA-2</scope>
    <scope>CLEAVAGE OF INITIATOR METHIONINE [LARGE SCALE ANALYSIS]</scope>
    <scope>IDENTIFICATION BY MASS SPECTROMETRY [LARGE SCALE ANALYSIS]</scope>
</reference>
<reference key="12">
    <citation type="journal article" date="2009" name="Sci. Signal.">
        <title>Quantitative phosphoproteomic analysis of T cell receptor signaling reveals system-wide modulation of protein-protein interactions.</title>
        <authorList>
            <person name="Mayya V."/>
            <person name="Lundgren D.H."/>
            <person name="Hwang S.-I."/>
            <person name="Rezaul K."/>
            <person name="Wu L."/>
            <person name="Eng J.K."/>
            <person name="Rodionov V."/>
            <person name="Han D.K."/>
        </authorList>
    </citation>
    <scope>PHOSPHORYLATION [LARGE SCALE ANALYSIS] AT THR-261 AND SER-263 (ISOFORM 3)</scope>
    <scope>IDENTIFICATION BY MASS SPECTROMETRY [LARGE SCALE ANALYSIS]</scope>
    <source>
        <tissue>Leukemic T-cell</tissue>
    </source>
</reference>
<reference key="13">
    <citation type="journal article" date="2011" name="BMC Syst. Biol.">
        <title>Initial characterization of the human central proteome.</title>
        <authorList>
            <person name="Burkard T.R."/>
            <person name="Planyavsky M."/>
            <person name="Kaupe I."/>
            <person name="Breitwieser F.P."/>
            <person name="Buerckstuemmer T."/>
            <person name="Bennett K.L."/>
            <person name="Superti-Furga G."/>
            <person name="Colinge J."/>
        </authorList>
    </citation>
    <scope>IDENTIFICATION BY MASS SPECTROMETRY [LARGE SCALE ANALYSIS]</scope>
</reference>
<reference key="14">
    <citation type="journal article" date="2015" name="Cell Rep.">
        <title>CSNAP is a stoichiometric subunit of the COP9 signalosome.</title>
        <authorList>
            <person name="Rozen S."/>
            <person name="Fuezesi-Levi M.G."/>
            <person name="Ben-Nissan G."/>
            <person name="Mizrachi L."/>
            <person name="Gabashvili A."/>
            <person name="Levin Y."/>
            <person name="Ben-Dor S."/>
            <person name="Eisenstein M."/>
            <person name="Sharon M."/>
        </authorList>
    </citation>
    <scope>COMPOSITION OF THE CSN COMPLEX</scope>
</reference>
<reference key="15">
    <citation type="journal article" date="2018" name="J. Virol.">
        <title>Vaccinia Virus C9 Ankyrin Repeat/F-Box Protein Is a Newly Identified Antagonist of the Type I Interferon-Induced Antiviral State.</title>
        <authorList>
            <person name="Liu R."/>
            <person name="Moss B."/>
        </authorList>
    </citation>
    <scope>INTERACTION WITH VACCINIA VIRUS PROTEIN C9L (MICROBIAL INFECTION)</scope>
</reference>
<comment type="function">
    <text evidence="4 5 7 8">Component of the COP9 signalosome complex (CSN), a complex involved in various cellular and developmental processes. The CSN complex is an essential regulator of the ubiquitin (Ubl) conjugation pathway by mediating the deneddylation of the cullin subunits of SCF-type E3 ligase complexes, leading to decrease the Ubl ligase activity of SCF-type complexes such as SCF, CSA or DDB2. The complex is also involved in phosphorylation of p53/TP53, JUN, I-kappa-B-alpha/NFKBIA, ITPK1 and IRF8/ICSBP, possibly via its association with CK2 and PKD kinases. CSN-dependent phosphorylation of TP53 and JUN promotes and protects degradation by the Ubl system, respectively.</text>
</comment>
<comment type="subunit">
    <text evidence="5 6 9 10">Component of the CSN complex, composed of COPS1/GPS1, COPS2, COPS3, COPS4, COPS5, COPS6, COPS7 (COPS7A or COPS7B), COPS8 and COPS9 isoform 1 (PubMed:11337588, PubMed:18850735, PubMed:26456823). In the complex, it probably interacts directly with COPS1, COPS2, COPS4, COPS5, COPS6 and COPS8 (PubMed:11337588, PubMed:18850735). Interacts with EIF3S6 (PubMed:12220626).</text>
</comment>
<comment type="subunit">
    <text evidence="11">(Microbial infection) Interacts with vaccinia virus protein C9L.</text>
</comment>
<comment type="interaction">
    <interactant intactId="EBI-2510162">
        <id>Q9H9Q2</id>
    </interactant>
    <interactant intactId="EBI-10243741">
        <id>Q5H9J7</id>
        <label>BEX5</label>
    </interactant>
    <organismsDiffer>false</organismsDiffer>
    <experiments>3</experiments>
</comment>
<comment type="interaction">
    <interactant intactId="EBI-2510162">
        <id>Q9H9Q2</id>
    </interactant>
    <interactant intactId="EBI-355710">
        <id>P48643</id>
        <label>CCT5</label>
    </interactant>
    <organismsDiffer>false</organismsDiffer>
    <experiments>3</experiments>
</comment>
<comment type="interaction">
    <interactant intactId="EBI-2510162">
        <id>Q9H9Q2</id>
    </interactant>
    <interactant intactId="EBI-352682">
        <id>P04792</id>
        <label>HSPB1</label>
    </interactant>
    <organismsDiffer>false</organismsDiffer>
    <experiments>3</experiments>
</comment>
<comment type="interaction">
    <interactant intactId="EBI-2510162">
        <id>Q9H9Q2</id>
    </interactant>
    <interactant intactId="EBI-372942">
        <id>Q13287</id>
        <label>NMI</label>
    </interactant>
    <organismsDiffer>false</organismsDiffer>
    <experiments>9</experiments>
</comment>
<comment type="subcellular location">
    <subcellularLocation>
        <location>Cytoplasm</location>
    </subcellularLocation>
    <subcellularLocation>
        <location>Nucleus</location>
    </subcellularLocation>
</comment>
<comment type="alternative products">
    <event type="alternative splicing"/>
    <isoform>
        <id>Q9H9Q2-1</id>
        <name>1</name>
        <sequence type="displayed"/>
    </isoform>
    <isoform>
        <id>Q9H9Q2-2</id>
        <name>2</name>
        <sequence type="described" ref="VSP_011913"/>
    </isoform>
    <isoform>
        <id>Q9H9Q2-3</id>
        <name>3</name>
        <sequence type="described" ref="VSP_040266"/>
    </isoform>
</comment>
<comment type="similarity">
    <text evidence="14">Belongs to the CSN7/EIF3M family. CSN7 subfamily.</text>
</comment>
<sequence length="264" mass="29622">MAGEQKPSSNLLEQFILLAKGTSGSALTALISQVLEAPGVYVFGELLELANVQELAEGANAAYLQLLNLFAYGTYPDYIANKESLPELSTAQQNKLKHLTIVSLASRMKCIPYSVLLKDLEMRNLRELEDLIIEAVYTDIIQGKLDQRNQLLEVDFCIGRDIRKKDINNIVKTLHEWCDGCEAVLLGIEQQVLRANQYKENHNRTQQQVEAEVTNIKKTLKATASSSAQEMEQQLAERECPPHAEQRQPTKKMSKVKGLVSSRH</sequence>